<gene>
    <name type="primary">cas6nc</name>
    <name type="ordered locus">PH0350</name>
</gene>
<sequence length="239" mass="27476">MRIEVKLLPLKDNPILPFNYNYEVYSQILEKVNSIEPTIAKLLSSPHGFWTFSRIIVRKRKILPDKGIEILSDDVSLYISSSNEDIIRAIAEAVEKSPEFKIGELSFLVGDIKAIKVKELGKENVFSTLSPIVVRTVKFEGNKLRHWDLYPHDELFMDRLRKVMILRYSEVMGETPKDRDFTIEVLKFKPTRLMVGSSYIRGSLMVFRYAGSEEIARFGYENGFGEKTGLGFGMVKLIE</sequence>
<protein>
    <recommendedName>
        <fullName>Putative CRISPR-associated endoribonuclease-like protein Cas6nc</fullName>
        <shortName>PhCas6nc</shortName>
    </recommendedName>
</protein>
<proteinExistence type="evidence at protein level"/>
<feature type="chain" id="PRO_0000417973" description="Putative CRISPR-associated endoribonuclease-like protein Cas6nc">
    <location>
        <begin position="1"/>
        <end position="239"/>
    </location>
</feature>
<feature type="strand" evidence="5">
    <location>
        <begin position="1"/>
        <end position="9"/>
    </location>
</feature>
<feature type="strand" evidence="5">
    <location>
        <begin position="11"/>
        <end position="13"/>
    </location>
</feature>
<feature type="strand" evidence="4">
    <location>
        <begin position="15"/>
        <end position="18"/>
    </location>
</feature>
<feature type="helix" evidence="5">
    <location>
        <begin position="21"/>
        <end position="35"/>
    </location>
</feature>
<feature type="helix" evidence="5">
    <location>
        <begin position="37"/>
        <end position="43"/>
    </location>
</feature>
<feature type="strand" evidence="5">
    <location>
        <begin position="51"/>
        <end position="56"/>
    </location>
</feature>
<feature type="strand" evidence="5">
    <location>
        <begin position="58"/>
        <end position="63"/>
    </location>
</feature>
<feature type="turn" evidence="5">
    <location>
        <begin position="64"/>
        <end position="66"/>
    </location>
</feature>
<feature type="strand" evidence="5">
    <location>
        <begin position="67"/>
        <end position="70"/>
    </location>
</feature>
<feature type="strand" evidence="5">
    <location>
        <begin position="75"/>
        <end position="82"/>
    </location>
</feature>
<feature type="helix" evidence="5">
    <location>
        <begin position="84"/>
        <end position="96"/>
    </location>
</feature>
<feature type="strand" evidence="5">
    <location>
        <begin position="99"/>
        <end position="102"/>
    </location>
</feature>
<feature type="strand" evidence="5">
    <location>
        <begin position="105"/>
        <end position="114"/>
    </location>
</feature>
<feature type="strand" evidence="5">
    <location>
        <begin position="122"/>
        <end position="130"/>
    </location>
</feature>
<feature type="strand" evidence="5">
    <location>
        <begin position="132"/>
        <end position="139"/>
    </location>
</feature>
<feature type="strand" evidence="5">
    <location>
        <begin position="141"/>
        <end position="149"/>
    </location>
</feature>
<feature type="helix" evidence="5">
    <location>
        <begin position="156"/>
        <end position="172"/>
    </location>
</feature>
<feature type="strand" evidence="5">
    <location>
        <begin position="181"/>
        <end position="193"/>
    </location>
</feature>
<feature type="strand" evidence="5">
    <location>
        <begin position="200"/>
        <end position="211"/>
    </location>
</feature>
<feature type="helix" evidence="5">
    <location>
        <begin position="213"/>
        <end position="222"/>
    </location>
</feature>
<feature type="strand" evidence="5">
    <location>
        <begin position="224"/>
        <end position="226"/>
    </location>
</feature>
<feature type="helix" evidence="5">
    <location>
        <begin position="228"/>
        <end position="230"/>
    </location>
</feature>
<feature type="strand" evidence="5">
    <location>
        <begin position="235"/>
        <end position="238"/>
    </location>
</feature>
<evidence type="ECO:0000269" key="1">
    <source>
    </source>
</evidence>
<evidence type="ECO:0000305" key="2"/>
<evidence type="ECO:0000305" key="3">
    <source>
    </source>
</evidence>
<evidence type="ECO:0007829" key="4">
    <source>
        <dbReference type="PDB" id="3QJJ"/>
    </source>
</evidence>
<evidence type="ECO:0007829" key="5">
    <source>
        <dbReference type="PDB" id="3QJL"/>
    </source>
</evidence>
<accession>O58088</accession>
<keyword id="KW-0002">3D-structure</keyword>
<keyword id="KW-0051">Antiviral defense</keyword>
<keyword id="KW-0694">RNA-binding</keyword>
<comment type="function">
    <text evidence="2">CRISPR (clustered regularly interspaced short palindromic repeat), is an adaptive immune system that provides protection against mobile genetic elements (viruses, transposable elements and conjugative plasmids). CRISPR clusters contain sequences complementary to antecedent mobile elements and target invading nucleic acids. CRISPR clusters are transcribed and processed into CRISPR RNA (crRNA), also called psiRNA (prokaryotic silencing) in this organism (Potential).</text>
</comment>
<comment type="subunit">
    <text evidence="1">Monomer; homodimer when crystallized in the presence of crRNA. Varying the crRNA sequence varies degree of oligomerization and structure.</text>
</comment>
<comment type="similarity">
    <text evidence="2">Belongs to the CRISPR-associated protein Cas6/Cse3/CasE family.</text>
</comment>
<comment type="caution">
    <text evidence="3">No in vitro nuclease activity has been observed against crRNA for this protein.</text>
</comment>
<reference key="1">
    <citation type="journal article" date="1998" name="DNA Res.">
        <title>Complete sequence and gene organization of the genome of a hyper-thermophilic archaebacterium, Pyrococcus horikoshii OT3.</title>
        <authorList>
            <person name="Kawarabayasi Y."/>
            <person name="Sawada M."/>
            <person name="Horikawa H."/>
            <person name="Haikawa Y."/>
            <person name="Hino Y."/>
            <person name="Yamamoto S."/>
            <person name="Sekine M."/>
            <person name="Baba S."/>
            <person name="Kosugi H."/>
            <person name="Hosoyama A."/>
            <person name="Nagai Y."/>
            <person name="Sakai M."/>
            <person name="Ogura K."/>
            <person name="Otsuka R."/>
            <person name="Nakazawa H."/>
            <person name="Takamiya M."/>
            <person name="Ohfuku Y."/>
            <person name="Funahashi T."/>
            <person name="Tanaka T."/>
            <person name="Kudoh Y."/>
            <person name="Yamazaki J."/>
            <person name="Kushida N."/>
            <person name="Oguchi A."/>
            <person name="Aoki K."/>
            <person name="Yoshizawa T."/>
            <person name="Nakamura Y."/>
            <person name="Robb F.T."/>
            <person name="Horikoshi K."/>
            <person name="Masuchi Y."/>
            <person name="Shizuya H."/>
            <person name="Kikuchi H."/>
        </authorList>
    </citation>
    <scope>NUCLEOTIDE SEQUENCE [LARGE SCALE GENOMIC DNA]</scope>
    <source>
        <strain>ATCC 700860 / DSM 12428 / JCM 9974 / NBRC 100139 / OT-3</strain>
    </source>
</reference>
<reference key="2">
    <citation type="journal article" date="2012" name="Protein Sci.">
        <title>The impact of CRISPR repeat sequence on structures of a Cas6 protein-RNA complex.</title>
        <authorList>
            <person name="Wang R."/>
            <person name="Zheng H."/>
            <person name="Preamplume G."/>
            <person name="Shao Y."/>
            <person name="Li H."/>
        </authorList>
    </citation>
    <scope>X-RAY CRYSTALLOGRAPHY (2.70 ANGSTROMS) IN PRESENCE AND ABSENCE OF RNA</scope>
    <scope>SUBUNIT</scope>
    <scope>RNA-BINDING</scope>
    <scope>LACK OF FUNCTION AS AN ENDORIBONUCLEASE</scope>
    <source>
        <strain>ATCC 700860 / DSM 12428 / JCM 9974 / NBRC 100139 / OT-3</strain>
    </source>
</reference>
<name>CAS6L_PYRHO</name>
<dbReference type="EMBL" id="BA000001">
    <property type="protein sequence ID" value="BAA29424.1"/>
    <property type="molecule type" value="Genomic_DNA"/>
</dbReference>
<dbReference type="PIR" id="C71142">
    <property type="entry name" value="C71142"/>
</dbReference>
<dbReference type="RefSeq" id="WP_010884439.1">
    <property type="nucleotide sequence ID" value="NC_000961.1"/>
</dbReference>
<dbReference type="PDB" id="3QJJ">
    <property type="method" value="X-ray"/>
    <property type="resolution" value="2.80 A"/>
    <property type="chains" value="A/B=1-239"/>
</dbReference>
<dbReference type="PDB" id="3QJL">
    <property type="method" value="X-ray"/>
    <property type="resolution" value="2.70 A"/>
    <property type="chains" value="A/B=1-239"/>
</dbReference>
<dbReference type="PDB" id="3QJP">
    <property type="method" value="X-ray"/>
    <property type="resolution" value="3.30 A"/>
    <property type="chains" value="A=1-239"/>
</dbReference>
<dbReference type="PDBsum" id="3QJJ"/>
<dbReference type="PDBsum" id="3QJL"/>
<dbReference type="PDBsum" id="3QJP"/>
<dbReference type="SMR" id="O58088"/>
<dbReference type="STRING" id="70601.gene:9377269"/>
<dbReference type="EnsemblBacteria" id="BAA29424">
    <property type="protein sequence ID" value="BAA29424"/>
    <property type="gene ID" value="BAA29424"/>
</dbReference>
<dbReference type="GeneID" id="1444226"/>
<dbReference type="KEGG" id="pho:PH0350"/>
<dbReference type="eggNOG" id="arCOG04342">
    <property type="taxonomic scope" value="Archaea"/>
</dbReference>
<dbReference type="OrthoDB" id="43942at2157"/>
<dbReference type="EvolutionaryTrace" id="O58088"/>
<dbReference type="Proteomes" id="UP000000752">
    <property type="component" value="Chromosome"/>
</dbReference>
<dbReference type="GO" id="GO:0016788">
    <property type="term" value="F:hydrolase activity, acting on ester bonds"/>
    <property type="evidence" value="ECO:0007669"/>
    <property type="project" value="InterPro"/>
</dbReference>
<dbReference type="GO" id="GO:0003723">
    <property type="term" value="F:RNA binding"/>
    <property type="evidence" value="ECO:0007669"/>
    <property type="project" value="UniProtKB-KW"/>
</dbReference>
<dbReference type="GO" id="GO:0051607">
    <property type="term" value="P:defense response to virus"/>
    <property type="evidence" value="ECO:0007669"/>
    <property type="project" value="UniProtKB-KW"/>
</dbReference>
<dbReference type="Gene3D" id="3.30.70.1890">
    <property type="match status" value="1"/>
</dbReference>
<dbReference type="Gene3D" id="3.30.70.1900">
    <property type="match status" value="1"/>
</dbReference>
<dbReference type="InterPro" id="IPR049435">
    <property type="entry name" value="Cas_Cas6_C"/>
</dbReference>
<dbReference type="InterPro" id="IPR010156">
    <property type="entry name" value="CRISPR-assoc_prot_Cas6"/>
</dbReference>
<dbReference type="InterPro" id="IPR045747">
    <property type="entry name" value="CRISPR-assoc_prot_Cas6_N_sf"/>
</dbReference>
<dbReference type="NCBIfam" id="TIGR01877">
    <property type="entry name" value="cas_cas6"/>
    <property type="match status" value="1"/>
</dbReference>
<dbReference type="PANTHER" id="PTHR36984">
    <property type="entry name" value="CRISPR-ASSOCIATED ENDORIBONUCLEASE CAS6 1"/>
    <property type="match status" value="1"/>
</dbReference>
<dbReference type="PANTHER" id="PTHR36984:SF1">
    <property type="entry name" value="CRISPR-ASSOCIATED ENDORIBONUCLEASE CAS6 1"/>
    <property type="match status" value="1"/>
</dbReference>
<dbReference type="Pfam" id="PF21350">
    <property type="entry name" value="Cas6_I-A"/>
    <property type="match status" value="1"/>
</dbReference>
<dbReference type="Pfam" id="PF01881">
    <property type="entry name" value="Cas_Cas6_C"/>
    <property type="match status" value="1"/>
</dbReference>
<dbReference type="PIRSF" id="PIRSF005054">
    <property type="entry name" value="PF1131"/>
    <property type="match status" value="1"/>
</dbReference>
<organism>
    <name type="scientific">Pyrococcus horikoshii (strain ATCC 700860 / DSM 12428 / JCM 9974 / NBRC 100139 / OT-3)</name>
    <dbReference type="NCBI Taxonomy" id="70601"/>
    <lineage>
        <taxon>Archaea</taxon>
        <taxon>Methanobacteriati</taxon>
        <taxon>Methanobacteriota</taxon>
        <taxon>Thermococci</taxon>
        <taxon>Thermococcales</taxon>
        <taxon>Thermococcaceae</taxon>
        <taxon>Pyrococcus</taxon>
    </lineage>
</organism>